<accession>B8DH72</accession>
<reference key="1">
    <citation type="journal article" date="2011" name="J. Bacteriol.">
        <title>Genome sequence of lineage III Listeria monocytogenes strain HCC23.</title>
        <authorList>
            <person name="Steele C.L."/>
            <person name="Donaldson J.R."/>
            <person name="Paul D."/>
            <person name="Banes M.M."/>
            <person name="Arick T."/>
            <person name="Bridges S.M."/>
            <person name="Lawrence M.L."/>
        </authorList>
    </citation>
    <scope>NUCLEOTIDE SEQUENCE [LARGE SCALE GENOMIC DNA]</scope>
    <source>
        <strain>HCC23</strain>
    </source>
</reference>
<sequence>MNQIEKTGELSASRFTVRDFTELVKIGIVNSNTITAFTGMWLAFQLNGISFIQNVDVIFFTIVGSALIVAASGAFNNVIDRDIDGIMERTKNRPTMTGKISGKRALMVALVLGVVGTIMLFMTTWQAGVLGVIGVFLYVVVYSLYAKRKLVSNTVIGSFSGAVPPLIGWFAVEPSFSIVPIMLFLVMFCWQPPHFYAIAIKRKEEYAAAGIPMLPVVKGIERTKKSMFFWVILLTILPFFMFELGIVYVVLATLLNIGWLALSIYGFKMEDSIKWAKWMFVYSLNYMTILFVAMVVISIFL</sequence>
<protein>
    <recommendedName>
        <fullName evidence="1">Protoheme IX farnesyltransferase</fullName>
        <ecNumber evidence="1">2.5.1.141</ecNumber>
    </recommendedName>
    <alternativeName>
        <fullName evidence="1">Heme B farnesyltransferase</fullName>
    </alternativeName>
    <alternativeName>
        <fullName evidence="1">Heme O synthase</fullName>
    </alternativeName>
</protein>
<comment type="function">
    <text evidence="1">Converts heme B (protoheme IX) to heme O by substitution of the vinyl group on carbon 2 of heme B porphyrin ring with a hydroxyethyl farnesyl side group.</text>
</comment>
<comment type="catalytic activity">
    <reaction evidence="1">
        <text>heme b + (2E,6E)-farnesyl diphosphate + H2O = Fe(II)-heme o + diphosphate</text>
        <dbReference type="Rhea" id="RHEA:28070"/>
        <dbReference type="ChEBI" id="CHEBI:15377"/>
        <dbReference type="ChEBI" id="CHEBI:33019"/>
        <dbReference type="ChEBI" id="CHEBI:60344"/>
        <dbReference type="ChEBI" id="CHEBI:60530"/>
        <dbReference type="ChEBI" id="CHEBI:175763"/>
        <dbReference type="EC" id="2.5.1.141"/>
    </reaction>
</comment>
<comment type="pathway">
    <text evidence="1">Porphyrin-containing compound metabolism; heme O biosynthesis; heme O from protoheme: step 1/1.</text>
</comment>
<comment type="subunit">
    <text evidence="1">Interacts with CtaA.</text>
</comment>
<comment type="subcellular location">
    <subcellularLocation>
        <location evidence="1">Cell membrane</location>
        <topology evidence="1">Multi-pass membrane protein</topology>
    </subcellularLocation>
</comment>
<comment type="miscellaneous">
    <text evidence="1">Carbon 2 of the heme B porphyrin ring is defined according to the Fischer nomenclature.</text>
</comment>
<comment type="similarity">
    <text evidence="1">Belongs to the UbiA prenyltransferase family. Protoheme IX farnesyltransferase subfamily.</text>
</comment>
<dbReference type="EC" id="2.5.1.141" evidence="1"/>
<dbReference type="EMBL" id="CP001175">
    <property type="protein sequence ID" value="ACK38860.1"/>
    <property type="molecule type" value="Genomic_DNA"/>
</dbReference>
<dbReference type="SMR" id="B8DH72"/>
<dbReference type="KEGG" id="lmh:LMHCC_0503"/>
<dbReference type="HOGENOM" id="CLU_029631_0_0_9"/>
<dbReference type="UniPathway" id="UPA00834">
    <property type="reaction ID" value="UER00712"/>
</dbReference>
<dbReference type="GO" id="GO:0005886">
    <property type="term" value="C:plasma membrane"/>
    <property type="evidence" value="ECO:0007669"/>
    <property type="project" value="UniProtKB-SubCell"/>
</dbReference>
<dbReference type="GO" id="GO:0008495">
    <property type="term" value="F:protoheme IX farnesyltransferase activity"/>
    <property type="evidence" value="ECO:0007669"/>
    <property type="project" value="UniProtKB-UniRule"/>
</dbReference>
<dbReference type="GO" id="GO:0048034">
    <property type="term" value="P:heme O biosynthetic process"/>
    <property type="evidence" value="ECO:0007669"/>
    <property type="project" value="UniProtKB-UniRule"/>
</dbReference>
<dbReference type="CDD" id="cd13957">
    <property type="entry name" value="PT_UbiA_Cox10"/>
    <property type="match status" value="1"/>
</dbReference>
<dbReference type="FunFam" id="1.10.357.140:FF:000001">
    <property type="entry name" value="Protoheme IX farnesyltransferase"/>
    <property type="match status" value="1"/>
</dbReference>
<dbReference type="Gene3D" id="1.10.357.140">
    <property type="entry name" value="UbiA prenyltransferase"/>
    <property type="match status" value="1"/>
</dbReference>
<dbReference type="HAMAP" id="MF_00154">
    <property type="entry name" value="CyoE_CtaB"/>
    <property type="match status" value="1"/>
</dbReference>
<dbReference type="InterPro" id="IPR006369">
    <property type="entry name" value="Protohaem_IX_farnesylTrfase"/>
</dbReference>
<dbReference type="InterPro" id="IPR000537">
    <property type="entry name" value="UbiA_prenyltransferase"/>
</dbReference>
<dbReference type="InterPro" id="IPR030470">
    <property type="entry name" value="UbiA_prenylTrfase_CS"/>
</dbReference>
<dbReference type="InterPro" id="IPR044878">
    <property type="entry name" value="UbiA_sf"/>
</dbReference>
<dbReference type="NCBIfam" id="TIGR01473">
    <property type="entry name" value="cyoE_ctaB"/>
    <property type="match status" value="1"/>
</dbReference>
<dbReference type="PANTHER" id="PTHR43448">
    <property type="entry name" value="PROTOHEME IX FARNESYLTRANSFERASE, MITOCHONDRIAL"/>
    <property type="match status" value="1"/>
</dbReference>
<dbReference type="PANTHER" id="PTHR43448:SF2">
    <property type="entry name" value="PROTOHEME IX FARNESYLTRANSFERASE, MITOCHONDRIAL"/>
    <property type="match status" value="1"/>
</dbReference>
<dbReference type="Pfam" id="PF01040">
    <property type="entry name" value="UbiA"/>
    <property type="match status" value="1"/>
</dbReference>
<dbReference type="PROSITE" id="PS00943">
    <property type="entry name" value="UBIA"/>
    <property type="match status" value="1"/>
</dbReference>
<name>COXX_LISMH</name>
<evidence type="ECO:0000255" key="1">
    <source>
        <dbReference type="HAMAP-Rule" id="MF_00154"/>
    </source>
</evidence>
<organism>
    <name type="scientific">Listeria monocytogenes serotype 4a (strain HCC23)</name>
    <dbReference type="NCBI Taxonomy" id="552536"/>
    <lineage>
        <taxon>Bacteria</taxon>
        <taxon>Bacillati</taxon>
        <taxon>Bacillota</taxon>
        <taxon>Bacilli</taxon>
        <taxon>Bacillales</taxon>
        <taxon>Listeriaceae</taxon>
        <taxon>Listeria</taxon>
    </lineage>
</organism>
<keyword id="KW-1003">Cell membrane</keyword>
<keyword id="KW-0350">Heme biosynthesis</keyword>
<keyword id="KW-0472">Membrane</keyword>
<keyword id="KW-0808">Transferase</keyword>
<keyword id="KW-0812">Transmembrane</keyword>
<keyword id="KW-1133">Transmembrane helix</keyword>
<gene>
    <name evidence="1" type="primary">ctaB</name>
    <name type="ordered locus">LMHCC_0503</name>
</gene>
<proteinExistence type="inferred from homology"/>
<feature type="chain" id="PRO_1000199652" description="Protoheme IX farnesyltransferase">
    <location>
        <begin position="1"/>
        <end position="301"/>
    </location>
</feature>
<feature type="transmembrane region" description="Helical" evidence="1">
    <location>
        <begin position="20"/>
        <end position="42"/>
    </location>
</feature>
<feature type="transmembrane region" description="Helical" evidence="1">
    <location>
        <begin position="55"/>
        <end position="75"/>
    </location>
</feature>
<feature type="transmembrane region" description="Helical" evidence="1">
    <location>
        <begin position="105"/>
        <end position="125"/>
    </location>
</feature>
<feature type="transmembrane region" description="Helical" evidence="1">
    <location>
        <begin position="126"/>
        <end position="146"/>
    </location>
</feature>
<feature type="transmembrane region" description="Helical" evidence="1">
    <location>
        <begin position="150"/>
        <end position="172"/>
    </location>
</feature>
<feature type="transmembrane region" description="Helical" evidence="1">
    <location>
        <begin position="176"/>
        <end position="198"/>
    </location>
</feature>
<feature type="transmembrane region" description="Helical" evidence="1">
    <location>
        <begin position="227"/>
        <end position="247"/>
    </location>
</feature>
<feature type="transmembrane region" description="Helical" evidence="1">
    <location>
        <begin position="249"/>
        <end position="269"/>
    </location>
</feature>
<feature type="transmembrane region" description="Helical" evidence="1">
    <location>
        <begin position="280"/>
        <end position="300"/>
    </location>
</feature>